<organism>
    <name type="scientific">Shigella flexneri serotype 5b (strain 8401)</name>
    <dbReference type="NCBI Taxonomy" id="373384"/>
    <lineage>
        <taxon>Bacteria</taxon>
        <taxon>Pseudomonadati</taxon>
        <taxon>Pseudomonadota</taxon>
        <taxon>Gammaproteobacteria</taxon>
        <taxon>Enterobacterales</taxon>
        <taxon>Enterobacteriaceae</taxon>
        <taxon>Shigella</taxon>
    </lineage>
</organism>
<name>ISCS_SHIF8</name>
<evidence type="ECO:0000255" key="1">
    <source>
        <dbReference type="HAMAP-Rule" id="MF_00331"/>
    </source>
</evidence>
<gene>
    <name evidence="1" type="primary">iscS</name>
    <name type="ordered locus">SFV_2578</name>
</gene>
<sequence length="404" mass="45090">MKLPIYLDYSATTPVDPRVAEKMMQFMTMDGTFGNPASRSHRFGWQAEEAVDIARNQIADLVGADPREIVFTSGATESDNLAIKGAANFYQKKGKHIITSKTEHKAVLDTCRQLEREGFEVTYLAPQRNGIIDLKELEAAMRDDTILVSIMHVNNEIGVVQDIAAIGEMCRARGIIYHVDATQSVGKLPIDLSQLKVDLMSFSGHKIYGPKGIGALYVRRKPRVRIEAQMHGGGHERGMRSGTLPVHQIVGMGEAYRIAKEEMATEMERLRGLRNRLWNGIKDIEEVYLNGDLEHGAPNILNVSFNYVEGESLIMALKDLAVSSGSACTSASLEPSYVLRALGLNDELAHSSIRFSLGRFTTEEEIDYTIELVRKSIGRLRDLSPLWEMYKQGVDLNSIEWAHH</sequence>
<keyword id="KW-0001">2Fe-2S</keyword>
<keyword id="KW-0963">Cytoplasm</keyword>
<keyword id="KW-0408">Iron</keyword>
<keyword id="KW-0411">Iron-sulfur</keyword>
<keyword id="KW-0479">Metal-binding</keyword>
<keyword id="KW-0663">Pyridoxal phosphate</keyword>
<keyword id="KW-0808">Transferase</keyword>
<reference key="1">
    <citation type="journal article" date="2006" name="BMC Genomics">
        <title>Complete genome sequence of Shigella flexneri 5b and comparison with Shigella flexneri 2a.</title>
        <authorList>
            <person name="Nie H."/>
            <person name="Yang F."/>
            <person name="Zhang X."/>
            <person name="Yang J."/>
            <person name="Chen L."/>
            <person name="Wang J."/>
            <person name="Xiong Z."/>
            <person name="Peng J."/>
            <person name="Sun L."/>
            <person name="Dong J."/>
            <person name="Xue Y."/>
            <person name="Xu X."/>
            <person name="Chen S."/>
            <person name="Yao Z."/>
            <person name="Shen Y."/>
            <person name="Jin Q."/>
        </authorList>
    </citation>
    <scope>NUCLEOTIDE SEQUENCE [LARGE SCALE GENOMIC DNA]</scope>
    <source>
        <strain>8401</strain>
    </source>
</reference>
<protein>
    <recommendedName>
        <fullName evidence="1">Cysteine desulfurase IscS</fullName>
        <ecNumber evidence="1">2.8.1.7</ecNumber>
    </recommendedName>
</protein>
<dbReference type="EC" id="2.8.1.7" evidence="1"/>
<dbReference type="EMBL" id="CP000266">
    <property type="protein sequence ID" value="ABF04676.1"/>
    <property type="molecule type" value="Genomic_DNA"/>
</dbReference>
<dbReference type="RefSeq" id="WP_001295373.1">
    <property type="nucleotide sequence ID" value="NC_008258.1"/>
</dbReference>
<dbReference type="SMR" id="Q0T1Y9"/>
<dbReference type="GeneID" id="93774606"/>
<dbReference type="KEGG" id="sfv:SFV_2578"/>
<dbReference type="HOGENOM" id="CLU_003433_0_2_6"/>
<dbReference type="UniPathway" id="UPA00266"/>
<dbReference type="Proteomes" id="UP000000659">
    <property type="component" value="Chromosome"/>
</dbReference>
<dbReference type="GO" id="GO:1990221">
    <property type="term" value="C:L-cysteine desulfurase complex"/>
    <property type="evidence" value="ECO:0007669"/>
    <property type="project" value="UniProtKB-ARBA"/>
</dbReference>
<dbReference type="GO" id="GO:0051537">
    <property type="term" value="F:2 iron, 2 sulfur cluster binding"/>
    <property type="evidence" value="ECO:0007669"/>
    <property type="project" value="UniProtKB-UniRule"/>
</dbReference>
<dbReference type="GO" id="GO:0031071">
    <property type="term" value="F:cysteine desulfurase activity"/>
    <property type="evidence" value="ECO:0007669"/>
    <property type="project" value="UniProtKB-UniRule"/>
</dbReference>
<dbReference type="GO" id="GO:0046872">
    <property type="term" value="F:metal ion binding"/>
    <property type="evidence" value="ECO:0007669"/>
    <property type="project" value="UniProtKB-KW"/>
</dbReference>
<dbReference type="GO" id="GO:0030170">
    <property type="term" value="F:pyridoxal phosphate binding"/>
    <property type="evidence" value="ECO:0007669"/>
    <property type="project" value="UniProtKB-UniRule"/>
</dbReference>
<dbReference type="GO" id="GO:0044571">
    <property type="term" value="P:[2Fe-2S] cluster assembly"/>
    <property type="evidence" value="ECO:0007669"/>
    <property type="project" value="UniProtKB-UniRule"/>
</dbReference>
<dbReference type="FunFam" id="3.40.640.10:FF:000003">
    <property type="entry name" value="Cysteine desulfurase IscS"/>
    <property type="match status" value="1"/>
</dbReference>
<dbReference type="FunFam" id="3.90.1150.10:FF:000002">
    <property type="entry name" value="Cysteine desulfurase IscS"/>
    <property type="match status" value="1"/>
</dbReference>
<dbReference type="Gene3D" id="3.90.1150.10">
    <property type="entry name" value="Aspartate Aminotransferase, domain 1"/>
    <property type="match status" value="1"/>
</dbReference>
<dbReference type="Gene3D" id="3.40.640.10">
    <property type="entry name" value="Type I PLP-dependent aspartate aminotransferase-like (Major domain)"/>
    <property type="match status" value="1"/>
</dbReference>
<dbReference type="HAMAP" id="MF_00331">
    <property type="entry name" value="Cys_desulf_IscS"/>
    <property type="match status" value="1"/>
</dbReference>
<dbReference type="InterPro" id="IPR000192">
    <property type="entry name" value="Aminotrans_V_dom"/>
</dbReference>
<dbReference type="InterPro" id="IPR020578">
    <property type="entry name" value="Aminotrans_V_PyrdxlP_BS"/>
</dbReference>
<dbReference type="InterPro" id="IPR010240">
    <property type="entry name" value="Cys_deSase_IscS"/>
</dbReference>
<dbReference type="InterPro" id="IPR016454">
    <property type="entry name" value="Cysteine_dSase"/>
</dbReference>
<dbReference type="InterPro" id="IPR015424">
    <property type="entry name" value="PyrdxlP-dep_Trfase"/>
</dbReference>
<dbReference type="InterPro" id="IPR015421">
    <property type="entry name" value="PyrdxlP-dep_Trfase_major"/>
</dbReference>
<dbReference type="InterPro" id="IPR015422">
    <property type="entry name" value="PyrdxlP-dep_Trfase_small"/>
</dbReference>
<dbReference type="NCBIfam" id="TIGR02006">
    <property type="entry name" value="IscS"/>
    <property type="match status" value="1"/>
</dbReference>
<dbReference type="NCBIfam" id="NF002806">
    <property type="entry name" value="PRK02948.1"/>
    <property type="match status" value="1"/>
</dbReference>
<dbReference type="NCBIfam" id="NF010611">
    <property type="entry name" value="PRK14012.1"/>
    <property type="match status" value="1"/>
</dbReference>
<dbReference type="PANTHER" id="PTHR11601:SF34">
    <property type="entry name" value="CYSTEINE DESULFURASE"/>
    <property type="match status" value="1"/>
</dbReference>
<dbReference type="PANTHER" id="PTHR11601">
    <property type="entry name" value="CYSTEINE DESULFURYLASE FAMILY MEMBER"/>
    <property type="match status" value="1"/>
</dbReference>
<dbReference type="Pfam" id="PF00266">
    <property type="entry name" value="Aminotran_5"/>
    <property type="match status" value="1"/>
</dbReference>
<dbReference type="PIRSF" id="PIRSF005572">
    <property type="entry name" value="NifS"/>
    <property type="match status" value="1"/>
</dbReference>
<dbReference type="SUPFAM" id="SSF53383">
    <property type="entry name" value="PLP-dependent transferases"/>
    <property type="match status" value="1"/>
</dbReference>
<dbReference type="PROSITE" id="PS00595">
    <property type="entry name" value="AA_TRANSFER_CLASS_5"/>
    <property type="match status" value="1"/>
</dbReference>
<comment type="function">
    <text evidence="1">Master enzyme that delivers sulfur to a number of partners involved in Fe-S cluster assembly, tRNA modification or cofactor biosynthesis. Catalyzes the removal of elemental sulfur and selenium atoms from cysteine and selenocysteine to produce alanine. Functions as a sulfur delivery protein for Fe-S cluster synthesis onto IscU, an Fe-S scaffold assembly protein, as well as other S acceptor proteins. Also functions as a selenium delivery protein in the pathway for the biosynthesis of selenophosphate.</text>
</comment>
<comment type="catalytic activity">
    <reaction evidence="1">
        <text>(sulfur carrier)-H + L-cysteine = (sulfur carrier)-SH + L-alanine</text>
        <dbReference type="Rhea" id="RHEA:43892"/>
        <dbReference type="Rhea" id="RHEA-COMP:14737"/>
        <dbReference type="Rhea" id="RHEA-COMP:14739"/>
        <dbReference type="ChEBI" id="CHEBI:29917"/>
        <dbReference type="ChEBI" id="CHEBI:35235"/>
        <dbReference type="ChEBI" id="CHEBI:57972"/>
        <dbReference type="ChEBI" id="CHEBI:64428"/>
        <dbReference type="EC" id="2.8.1.7"/>
    </reaction>
</comment>
<comment type="cofactor">
    <cofactor evidence="1">
        <name>pyridoxal 5'-phosphate</name>
        <dbReference type="ChEBI" id="CHEBI:597326"/>
    </cofactor>
</comment>
<comment type="pathway">
    <text evidence="1">Cofactor biosynthesis; iron-sulfur cluster biosynthesis.</text>
</comment>
<comment type="subunit">
    <text evidence="1">Homodimer. Forms a heterotetramer with IscU, interacts with other sulfur acceptors.</text>
</comment>
<comment type="subcellular location">
    <subcellularLocation>
        <location evidence="1">Cytoplasm</location>
    </subcellularLocation>
</comment>
<comment type="similarity">
    <text evidence="1">Belongs to the class-V pyridoxal-phosphate-dependent aminotransferase family. NifS/IscS subfamily.</text>
</comment>
<feature type="chain" id="PRO_1000019452" description="Cysteine desulfurase IscS">
    <location>
        <begin position="1"/>
        <end position="404"/>
    </location>
</feature>
<feature type="active site" description="Cysteine persulfide intermediate" evidence="1">
    <location>
        <position position="328"/>
    </location>
</feature>
<feature type="binding site" evidence="1">
    <location>
        <begin position="75"/>
        <end position="76"/>
    </location>
    <ligand>
        <name>pyridoxal 5'-phosphate</name>
        <dbReference type="ChEBI" id="CHEBI:597326"/>
    </ligand>
</feature>
<feature type="binding site" evidence="1">
    <location>
        <position position="155"/>
    </location>
    <ligand>
        <name>pyridoxal 5'-phosphate</name>
        <dbReference type="ChEBI" id="CHEBI:597326"/>
    </ligand>
</feature>
<feature type="binding site" evidence="1">
    <location>
        <position position="183"/>
    </location>
    <ligand>
        <name>pyridoxal 5'-phosphate</name>
        <dbReference type="ChEBI" id="CHEBI:597326"/>
    </ligand>
</feature>
<feature type="binding site" evidence="1">
    <location>
        <begin position="203"/>
        <end position="205"/>
    </location>
    <ligand>
        <name>pyridoxal 5'-phosphate</name>
        <dbReference type="ChEBI" id="CHEBI:597326"/>
    </ligand>
</feature>
<feature type="binding site" evidence="1">
    <location>
        <position position="243"/>
    </location>
    <ligand>
        <name>pyridoxal 5'-phosphate</name>
        <dbReference type="ChEBI" id="CHEBI:597326"/>
    </ligand>
</feature>
<feature type="binding site" description="via persulfide group" evidence="1">
    <location>
        <position position="328"/>
    </location>
    <ligand>
        <name>[2Fe-2S] cluster</name>
        <dbReference type="ChEBI" id="CHEBI:190135"/>
        <note>ligand shared with IscU</note>
    </ligand>
</feature>
<feature type="modified residue" description="N6-(pyridoxal phosphate)lysine" evidence="1">
    <location>
        <position position="206"/>
    </location>
</feature>
<accession>Q0T1Y9</accession>
<proteinExistence type="inferred from homology"/>